<dbReference type="EMBL" id="AJ000028">
    <property type="protein sequence ID" value="CAA03867.1"/>
    <property type="molecule type" value="Genomic_DNA"/>
</dbReference>
<dbReference type="RefSeq" id="YP_002456358.1">
    <property type="nucleotide sequence ID" value="NC_011821.1"/>
</dbReference>
<dbReference type="SMR" id="O47930"/>
<dbReference type="GeneID" id="7256470"/>
<dbReference type="CTD" id="4519"/>
<dbReference type="GO" id="GO:0005743">
    <property type="term" value="C:mitochondrial inner membrane"/>
    <property type="evidence" value="ECO:0007669"/>
    <property type="project" value="UniProtKB-SubCell"/>
</dbReference>
<dbReference type="GO" id="GO:0045275">
    <property type="term" value="C:respiratory chain complex III"/>
    <property type="evidence" value="ECO:0007669"/>
    <property type="project" value="InterPro"/>
</dbReference>
<dbReference type="GO" id="GO:0046872">
    <property type="term" value="F:metal ion binding"/>
    <property type="evidence" value="ECO:0007669"/>
    <property type="project" value="UniProtKB-KW"/>
</dbReference>
<dbReference type="GO" id="GO:0008121">
    <property type="term" value="F:ubiquinol-cytochrome-c reductase activity"/>
    <property type="evidence" value="ECO:0007669"/>
    <property type="project" value="InterPro"/>
</dbReference>
<dbReference type="GO" id="GO:0006122">
    <property type="term" value="P:mitochondrial electron transport, ubiquinol to cytochrome c"/>
    <property type="evidence" value="ECO:0007669"/>
    <property type="project" value="TreeGrafter"/>
</dbReference>
<dbReference type="CDD" id="cd00290">
    <property type="entry name" value="cytochrome_b_C"/>
    <property type="match status" value="1"/>
</dbReference>
<dbReference type="CDD" id="cd00284">
    <property type="entry name" value="Cytochrome_b_N"/>
    <property type="match status" value="1"/>
</dbReference>
<dbReference type="FunFam" id="1.20.810.10:FF:000002">
    <property type="entry name" value="Cytochrome b"/>
    <property type="match status" value="1"/>
</dbReference>
<dbReference type="Gene3D" id="1.20.810.10">
    <property type="entry name" value="Cytochrome Bc1 Complex, Chain C"/>
    <property type="match status" value="1"/>
</dbReference>
<dbReference type="InterPro" id="IPR005798">
    <property type="entry name" value="Cyt_b/b6_C"/>
</dbReference>
<dbReference type="InterPro" id="IPR036150">
    <property type="entry name" value="Cyt_b/b6_C_sf"/>
</dbReference>
<dbReference type="InterPro" id="IPR005797">
    <property type="entry name" value="Cyt_b/b6_N"/>
</dbReference>
<dbReference type="InterPro" id="IPR027387">
    <property type="entry name" value="Cytb/b6-like_sf"/>
</dbReference>
<dbReference type="InterPro" id="IPR030689">
    <property type="entry name" value="Cytochrome_b"/>
</dbReference>
<dbReference type="InterPro" id="IPR048260">
    <property type="entry name" value="Cytochrome_b_C_euk/bac"/>
</dbReference>
<dbReference type="InterPro" id="IPR048259">
    <property type="entry name" value="Cytochrome_b_N_euk/bac"/>
</dbReference>
<dbReference type="InterPro" id="IPR016174">
    <property type="entry name" value="Di-haem_cyt_TM"/>
</dbReference>
<dbReference type="PANTHER" id="PTHR19271">
    <property type="entry name" value="CYTOCHROME B"/>
    <property type="match status" value="1"/>
</dbReference>
<dbReference type="PANTHER" id="PTHR19271:SF16">
    <property type="entry name" value="CYTOCHROME B"/>
    <property type="match status" value="1"/>
</dbReference>
<dbReference type="Pfam" id="PF00032">
    <property type="entry name" value="Cytochrom_B_C"/>
    <property type="match status" value="1"/>
</dbReference>
<dbReference type="Pfam" id="PF00033">
    <property type="entry name" value="Cytochrome_B"/>
    <property type="match status" value="1"/>
</dbReference>
<dbReference type="PIRSF" id="PIRSF038885">
    <property type="entry name" value="COB"/>
    <property type="match status" value="1"/>
</dbReference>
<dbReference type="SUPFAM" id="SSF81648">
    <property type="entry name" value="a domain/subunit of cytochrome bc1 complex (Ubiquinol-cytochrome c reductase)"/>
    <property type="match status" value="1"/>
</dbReference>
<dbReference type="SUPFAM" id="SSF81342">
    <property type="entry name" value="Transmembrane di-heme cytochromes"/>
    <property type="match status" value="1"/>
</dbReference>
<dbReference type="PROSITE" id="PS51003">
    <property type="entry name" value="CYTB_CTER"/>
    <property type="match status" value="1"/>
</dbReference>
<dbReference type="PROSITE" id="PS51002">
    <property type="entry name" value="CYTB_NTER"/>
    <property type="match status" value="1"/>
</dbReference>
<proteinExistence type="inferred from homology"/>
<sequence>MTNMRKTHPLMKIVNNAFIDLPAPSNISSWWNFGSLLGICLILQILTGLFLAMHYTSDTMTAFSSVTHICRDVNYGWIIRYMHANGASMFFICLFLHVGRGLYYGSYTFLETWNIGVILLFTVMATAFVGYVLPWGQMSFWGATVITNLLSAIPYVGTNLVEWIWGGFSVDKATLTRFFAFHFILPFIIAALAMVHLLFLHETGSNNPTGIPSDADKIPFHPYYTIKDILGVLLLILFLMLLVLFSPDLLGDPDNYTPANPLNTPPHIKPEWYFLFAYAILRSIPNKLGGVLALVSSILVLILMPLLHTSKQRSMMFRPFSQCLFWILVADLLTLTWIGGQPVEYPFIIIGQLASILYFLIILVLMPIISSIENNLLKW</sequence>
<geneLocation type="mitochondrion"/>
<protein>
    <recommendedName>
        <fullName>Cytochrome b</fullName>
    </recommendedName>
    <alternativeName>
        <fullName>Complex III subunit 3</fullName>
    </alternativeName>
    <alternativeName>
        <fullName>Complex III subunit III</fullName>
    </alternativeName>
    <alternativeName>
        <fullName>Cytochrome b-c1 complex subunit 3</fullName>
    </alternativeName>
    <alternativeName>
        <fullName>Ubiquinol-cytochrome-c reductase complex cytochrome b subunit</fullName>
    </alternativeName>
</protein>
<organism>
    <name type="scientific">Hydropotes inermis</name>
    <name type="common">Chinese water deer</name>
    <dbReference type="NCBI Taxonomy" id="9883"/>
    <lineage>
        <taxon>Eukaryota</taxon>
        <taxon>Metazoa</taxon>
        <taxon>Chordata</taxon>
        <taxon>Craniata</taxon>
        <taxon>Vertebrata</taxon>
        <taxon>Euteleostomi</taxon>
        <taxon>Mammalia</taxon>
        <taxon>Eutheria</taxon>
        <taxon>Laurasiatheria</taxon>
        <taxon>Artiodactyla</taxon>
        <taxon>Ruminantia</taxon>
        <taxon>Pecora</taxon>
        <taxon>Cervidae</taxon>
        <taxon>Hydropotinae</taxon>
        <taxon>Hydropotes</taxon>
    </lineage>
</organism>
<reference key="1">
    <citation type="journal article" date="1998" name="Proc. R. Soc. B">
        <title>New phylogenetic perspectives on the Cervidae (Artiodactyla) are provided by the mitochondrial cytochrome b gene.</title>
        <authorList>
            <person name="Randi E."/>
            <person name="Mucci N."/>
            <person name="Pierpaoli M."/>
            <person name="Douzery E.J.P."/>
        </authorList>
    </citation>
    <scope>NUCLEOTIDE SEQUENCE [GENOMIC DNA]</scope>
    <source>
        <strain>Isolate #4307</strain>
    </source>
</reference>
<accession>O47930</accession>
<evidence type="ECO:0000250" key="1"/>
<evidence type="ECO:0000250" key="2">
    <source>
        <dbReference type="UniProtKB" id="P00157"/>
    </source>
</evidence>
<evidence type="ECO:0000255" key="3">
    <source>
        <dbReference type="PROSITE-ProRule" id="PRU00967"/>
    </source>
</evidence>
<evidence type="ECO:0000255" key="4">
    <source>
        <dbReference type="PROSITE-ProRule" id="PRU00968"/>
    </source>
</evidence>
<comment type="function">
    <text evidence="2">Component of the ubiquinol-cytochrome c reductase complex (complex III or cytochrome b-c1 complex) that is part of the mitochondrial respiratory chain. The b-c1 complex mediates electron transfer from ubiquinol to cytochrome c. Contributes to the generation of a proton gradient across the mitochondrial membrane that is then used for ATP synthesis.</text>
</comment>
<comment type="cofactor">
    <cofactor evidence="2">
        <name>heme b</name>
        <dbReference type="ChEBI" id="CHEBI:60344"/>
    </cofactor>
    <text evidence="2">Binds 2 heme b groups non-covalently.</text>
</comment>
<comment type="subunit">
    <text evidence="2">The cytochrome bc1 complex contains 11 subunits: 3 respiratory subunits (MT-CYB, CYC1 and UQCRFS1), 2 core proteins (UQCRC1 and UQCRC2) and 6 low-molecular weight proteins (UQCRH/QCR6, UQCRB/QCR7, UQCRQ/QCR8, UQCR10/QCR9, UQCR11/QCR10 and a cleavage product of UQCRFS1). This cytochrome bc1 complex then forms a dimer.</text>
</comment>
<comment type="subcellular location">
    <subcellularLocation>
        <location evidence="2">Mitochondrion inner membrane</location>
        <topology evidence="2">Multi-pass membrane protein</topology>
    </subcellularLocation>
</comment>
<comment type="miscellaneous">
    <text evidence="1">Heme 1 (or BL or b562) is low-potential and absorbs at about 562 nm, and heme 2 (or BH or b566) is high-potential and absorbs at about 566 nm.</text>
</comment>
<comment type="similarity">
    <text evidence="3 4">Belongs to the cytochrome b family.</text>
</comment>
<comment type="caution">
    <text evidence="2">The full-length protein contains only eight transmembrane helices, not nine as predicted by bioinformatics tools.</text>
</comment>
<keyword id="KW-0249">Electron transport</keyword>
<keyword id="KW-0349">Heme</keyword>
<keyword id="KW-0408">Iron</keyword>
<keyword id="KW-0472">Membrane</keyword>
<keyword id="KW-0479">Metal-binding</keyword>
<keyword id="KW-0496">Mitochondrion</keyword>
<keyword id="KW-0999">Mitochondrion inner membrane</keyword>
<keyword id="KW-0679">Respiratory chain</keyword>
<keyword id="KW-0812">Transmembrane</keyword>
<keyword id="KW-1133">Transmembrane helix</keyword>
<keyword id="KW-0813">Transport</keyword>
<keyword id="KW-0830">Ubiquinone</keyword>
<gene>
    <name type="primary">MT-CYB</name>
    <name type="synonym">COB</name>
    <name type="synonym">CYTB</name>
    <name type="synonym">MTCYB</name>
</gene>
<name>CYB_HYDIN</name>
<feature type="chain" id="PRO_0000061047" description="Cytochrome b">
    <location>
        <begin position="1"/>
        <end position="379"/>
    </location>
</feature>
<feature type="transmembrane region" description="Helical" evidence="2">
    <location>
        <begin position="33"/>
        <end position="53"/>
    </location>
</feature>
<feature type="transmembrane region" description="Helical" evidence="2">
    <location>
        <begin position="77"/>
        <end position="98"/>
    </location>
</feature>
<feature type="transmembrane region" description="Helical" evidence="2">
    <location>
        <begin position="113"/>
        <end position="133"/>
    </location>
</feature>
<feature type="transmembrane region" description="Helical" evidence="2">
    <location>
        <begin position="178"/>
        <end position="198"/>
    </location>
</feature>
<feature type="transmembrane region" description="Helical" evidence="2">
    <location>
        <begin position="226"/>
        <end position="246"/>
    </location>
</feature>
<feature type="transmembrane region" description="Helical" evidence="2">
    <location>
        <begin position="288"/>
        <end position="308"/>
    </location>
</feature>
<feature type="transmembrane region" description="Helical" evidence="2">
    <location>
        <begin position="320"/>
        <end position="340"/>
    </location>
</feature>
<feature type="transmembrane region" description="Helical" evidence="2">
    <location>
        <begin position="347"/>
        <end position="367"/>
    </location>
</feature>
<feature type="binding site" description="axial binding residue" evidence="2">
    <location>
        <position position="83"/>
    </location>
    <ligand>
        <name>heme b</name>
        <dbReference type="ChEBI" id="CHEBI:60344"/>
        <label>b562</label>
    </ligand>
    <ligandPart>
        <name>Fe</name>
        <dbReference type="ChEBI" id="CHEBI:18248"/>
    </ligandPart>
</feature>
<feature type="binding site" description="axial binding residue" evidence="2">
    <location>
        <position position="97"/>
    </location>
    <ligand>
        <name>heme b</name>
        <dbReference type="ChEBI" id="CHEBI:60344"/>
        <label>b566</label>
    </ligand>
    <ligandPart>
        <name>Fe</name>
        <dbReference type="ChEBI" id="CHEBI:18248"/>
    </ligandPart>
</feature>
<feature type="binding site" description="axial binding residue" evidence="2">
    <location>
        <position position="182"/>
    </location>
    <ligand>
        <name>heme b</name>
        <dbReference type="ChEBI" id="CHEBI:60344"/>
        <label>b562</label>
    </ligand>
    <ligandPart>
        <name>Fe</name>
        <dbReference type="ChEBI" id="CHEBI:18248"/>
    </ligandPart>
</feature>
<feature type="binding site" description="axial binding residue" evidence="2">
    <location>
        <position position="196"/>
    </location>
    <ligand>
        <name>heme b</name>
        <dbReference type="ChEBI" id="CHEBI:60344"/>
        <label>b566</label>
    </ligand>
    <ligandPart>
        <name>Fe</name>
        <dbReference type="ChEBI" id="CHEBI:18248"/>
    </ligandPart>
</feature>
<feature type="binding site" evidence="2">
    <location>
        <position position="201"/>
    </location>
    <ligand>
        <name>a ubiquinone</name>
        <dbReference type="ChEBI" id="CHEBI:16389"/>
    </ligand>
</feature>